<accession>A4XQV8</accession>
<evidence type="ECO:0000255" key="1">
    <source>
        <dbReference type="HAMAP-Rule" id="MF_00191"/>
    </source>
</evidence>
<feature type="chain" id="PRO_1000021163" description="4-hydroxy-3-methylbut-2-enyl diphosphate reductase">
    <location>
        <begin position="1"/>
        <end position="314"/>
    </location>
</feature>
<feature type="active site" description="Proton donor" evidence="1">
    <location>
        <position position="126"/>
    </location>
</feature>
<feature type="binding site" evidence="1">
    <location>
        <position position="12"/>
    </location>
    <ligand>
        <name>[4Fe-4S] cluster</name>
        <dbReference type="ChEBI" id="CHEBI:49883"/>
    </ligand>
</feature>
<feature type="binding site" evidence="1">
    <location>
        <position position="41"/>
    </location>
    <ligand>
        <name>(2E)-4-hydroxy-3-methylbut-2-enyl diphosphate</name>
        <dbReference type="ChEBI" id="CHEBI:128753"/>
    </ligand>
</feature>
<feature type="binding site" evidence="1">
    <location>
        <position position="41"/>
    </location>
    <ligand>
        <name>dimethylallyl diphosphate</name>
        <dbReference type="ChEBI" id="CHEBI:57623"/>
    </ligand>
</feature>
<feature type="binding site" evidence="1">
    <location>
        <position position="41"/>
    </location>
    <ligand>
        <name>isopentenyl diphosphate</name>
        <dbReference type="ChEBI" id="CHEBI:128769"/>
    </ligand>
</feature>
<feature type="binding site" evidence="1">
    <location>
        <position position="74"/>
    </location>
    <ligand>
        <name>(2E)-4-hydroxy-3-methylbut-2-enyl diphosphate</name>
        <dbReference type="ChEBI" id="CHEBI:128753"/>
    </ligand>
</feature>
<feature type="binding site" evidence="1">
    <location>
        <position position="74"/>
    </location>
    <ligand>
        <name>dimethylallyl diphosphate</name>
        <dbReference type="ChEBI" id="CHEBI:57623"/>
    </ligand>
</feature>
<feature type="binding site" evidence="1">
    <location>
        <position position="74"/>
    </location>
    <ligand>
        <name>isopentenyl diphosphate</name>
        <dbReference type="ChEBI" id="CHEBI:128769"/>
    </ligand>
</feature>
<feature type="binding site" evidence="1">
    <location>
        <position position="96"/>
    </location>
    <ligand>
        <name>[4Fe-4S] cluster</name>
        <dbReference type="ChEBI" id="CHEBI:49883"/>
    </ligand>
</feature>
<feature type="binding site" evidence="1">
    <location>
        <position position="124"/>
    </location>
    <ligand>
        <name>(2E)-4-hydroxy-3-methylbut-2-enyl diphosphate</name>
        <dbReference type="ChEBI" id="CHEBI:128753"/>
    </ligand>
</feature>
<feature type="binding site" evidence="1">
    <location>
        <position position="124"/>
    </location>
    <ligand>
        <name>dimethylallyl diphosphate</name>
        <dbReference type="ChEBI" id="CHEBI:57623"/>
    </ligand>
</feature>
<feature type="binding site" evidence="1">
    <location>
        <position position="124"/>
    </location>
    <ligand>
        <name>isopentenyl diphosphate</name>
        <dbReference type="ChEBI" id="CHEBI:128769"/>
    </ligand>
</feature>
<feature type="binding site" evidence="1">
    <location>
        <position position="168"/>
    </location>
    <ligand>
        <name>(2E)-4-hydroxy-3-methylbut-2-enyl diphosphate</name>
        <dbReference type="ChEBI" id="CHEBI:128753"/>
    </ligand>
</feature>
<feature type="binding site" evidence="1">
    <location>
        <position position="198"/>
    </location>
    <ligand>
        <name>[4Fe-4S] cluster</name>
        <dbReference type="ChEBI" id="CHEBI:49883"/>
    </ligand>
</feature>
<feature type="binding site" evidence="1">
    <location>
        <position position="226"/>
    </location>
    <ligand>
        <name>(2E)-4-hydroxy-3-methylbut-2-enyl diphosphate</name>
        <dbReference type="ChEBI" id="CHEBI:128753"/>
    </ligand>
</feature>
<feature type="binding site" evidence="1">
    <location>
        <position position="226"/>
    </location>
    <ligand>
        <name>dimethylallyl diphosphate</name>
        <dbReference type="ChEBI" id="CHEBI:57623"/>
    </ligand>
</feature>
<feature type="binding site" evidence="1">
    <location>
        <position position="226"/>
    </location>
    <ligand>
        <name>isopentenyl diphosphate</name>
        <dbReference type="ChEBI" id="CHEBI:128769"/>
    </ligand>
</feature>
<feature type="binding site" evidence="1">
    <location>
        <position position="227"/>
    </location>
    <ligand>
        <name>(2E)-4-hydroxy-3-methylbut-2-enyl diphosphate</name>
        <dbReference type="ChEBI" id="CHEBI:128753"/>
    </ligand>
</feature>
<feature type="binding site" evidence="1">
    <location>
        <position position="227"/>
    </location>
    <ligand>
        <name>dimethylallyl diphosphate</name>
        <dbReference type="ChEBI" id="CHEBI:57623"/>
    </ligand>
</feature>
<feature type="binding site" evidence="1">
    <location>
        <position position="227"/>
    </location>
    <ligand>
        <name>isopentenyl diphosphate</name>
        <dbReference type="ChEBI" id="CHEBI:128769"/>
    </ligand>
</feature>
<feature type="binding site" evidence="1">
    <location>
        <position position="228"/>
    </location>
    <ligand>
        <name>(2E)-4-hydroxy-3-methylbut-2-enyl diphosphate</name>
        <dbReference type="ChEBI" id="CHEBI:128753"/>
    </ligand>
</feature>
<feature type="binding site" evidence="1">
    <location>
        <position position="228"/>
    </location>
    <ligand>
        <name>dimethylallyl diphosphate</name>
        <dbReference type="ChEBI" id="CHEBI:57623"/>
    </ligand>
</feature>
<feature type="binding site" evidence="1">
    <location>
        <position position="228"/>
    </location>
    <ligand>
        <name>isopentenyl diphosphate</name>
        <dbReference type="ChEBI" id="CHEBI:128769"/>
    </ligand>
</feature>
<feature type="binding site" evidence="1">
    <location>
        <position position="270"/>
    </location>
    <ligand>
        <name>(2E)-4-hydroxy-3-methylbut-2-enyl diphosphate</name>
        <dbReference type="ChEBI" id="CHEBI:128753"/>
    </ligand>
</feature>
<feature type="binding site" evidence="1">
    <location>
        <position position="270"/>
    </location>
    <ligand>
        <name>dimethylallyl diphosphate</name>
        <dbReference type="ChEBI" id="CHEBI:57623"/>
    </ligand>
</feature>
<feature type="binding site" evidence="1">
    <location>
        <position position="270"/>
    </location>
    <ligand>
        <name>isopentenyl diphosphate</name>
        <dbReference type="ChEBI" id="CHEBI:128769"/>
    </ligand>
</feature>
<sequence>MHIKLANPRGFCAGVDRAIEIVNRALEVFGPPIYVRHEVVHNKFVVEDLRARGAVFVEELDQVPDDVIVIFSAHGVSKAVRDEAARRGLKVFDATCPLVTKVHMEVVRYSREGRECILIGHEGHPEVEGTMGQYDASNGGAIYLVEDEADVAELQVRNPDNLAFVTQTTLSMDDTSKVIDALRSKFPAIGGPRKDDICYATQNRQDAVKQLASECDVLLVVGSPNSSNSNRLRELAERMGTPAYLIDGAEDLKHEWFEGVKGIGITAGASAPEVLVRGVVEQLRAWGAAGETELDGRPENITFSMPKELRVKAL</sequence>
<keyword id="KW-0004">4Fe-4S</keyword>
<keyword id="KW-0408">Iron</keyword>
<keyword id="KW-0411">Iron-sulfur</keyword>
<keyword id="KW-0414">Isoprene biosynthesis</keyword>
<keyword id="KW-0479">Metal-binding</keyword>
<keyword id="KW-0560">Oxidoreductase</keyword>
<gene>
    <name evidence="1" type="primary">ispH</name>
    <name type="ordered locus">Pmen_0956</name>
</gene>
<reference key="1">
    <citation type="submission" date="2007-04" db="EMBL/GenBank/DDBJ databases">
        <title>Complete sequence of Pseudomonas mendocina ymp.</title>
        <authorList>
            <consortium name="US DOE Joint Genome Institute"/>
            <person name="Copeland A."/>
            <person name="Lucas S."/>
            <person name="Lapidus A."/>
            <person name="Barry K."/>
            <person name="Glavina del Rio T."/>
            <person name="Dalin E."/>
            <person name="Tice H."/>
            <person name="Pitluck S."/>
            <person name="Kiss H."/>
            <person name="Brettin T."/>
            <person name="Detter J.C."/>
            <person name="Bruce D."/>
            <person name="Han C."/>
            <person name="Schmutz J."/>
            <person name="Larimer F."/>
            <person name="Land M."/>
            <person name="Hauser L."/>
            <person name="Kyrpides N."/>
            <person name="Mikhailova N."/>
            <person name="Hersman L."/>
            <person name="Dubois J."/>
            <person name="Maurice P."/>
            <person name="Richardson P."/>
        </authorList>
    </citation>
    <scope>NUCLEOTIDE SEQUENCE [LARGE SCALE GENOMIC DNA]</scope>
    <source>
        <strain>ymp</strain>
    </source>
</reference>
<dbReference type="EC" id="1.17.7.4" evidence="1"/>
<dbReference type="EMBL" id="CP000680">
    <property type="protein sequence ID" value="ABP83724.1"/>
    <property type="molecule type" value="Genomic_DNA"/>
</dbReference>
<dbReference type="SMR" id="A4XQV8"/>
<dbReference type="STRING" id="399739.Pmen_0956"/>
<dbReference type="KEGG" id="pmy:Pmen_0956"/>
<dbReference type="PATRIC" id="fig|399739.8.peg.965"/>
<dbReference type="eggNOG" id="COG0761">
    <property type="taxonomic scope" value="Bacteria"/>
</dbReference>
<dbReference type="HOGENOM" id="CLU_027486_1_0_6"/>
<dbReference type="OrthoDB" id="9804068at2"/>
<dbReference type="UniPathway" id="UPA00056">
    <property type="reaction ID" value="UER00097"/>
</dbReference>
<dbReference type="UniPathway" id="UPA00059">
    <property type="reaction ID" value="UER00105"/>
</dbReference>
<dbReference type="GO" id="GO:0051539">
    <property type="term" value="F:4 iron, 4 sulfur cluster binding"/>
    <property type="evidence" value="ECO:0007669"/>
    <property type="project" value="UniProtKB-UniRule"/>
</dbReference>
<dbReference type="GO" id="GO:0051745">
    <property type="term" value="F:4-hydroxy-3-methylbut-2-enyl diphosphate reductase activity"/>
    <property type="evidence" value="ECO:0007669"/>
    <property type="project" value="UniProtKB-UniRule"/>
</dbReference>
<dbReference type="GO" id="GO:0046872">
    <property type="term" value="F:metal ion binding"/>
    <property type="evidence" value="ECO:0007669"/>
    <property type="project" value="UniProtKB-KW"/>
</dbReference>
<dbReference type="GO" id="GO:0050992">
    <property type="term" value="P:dimethylallyl diphosphate biosynthetic process"/>
    <property type="evidence" value="ECO:0007669"/>
    <property type="project" value="UniProtKB-UniRule"/>
</dbReference>
<dbReference type="GO" id="GO:0019288">
    <property type="term" value="P:isopentenyl diphosphate biosynthetic process, methylerythritol 4-phosphate pathway"/>
    <property type="evidence" value="ECO:0007669"/>
    <property type="project" value="UniProtKB-UniRule"/>
</dbReference>
<dbReference type="GO" id="GO:0016114">
    <property type="term" value="P:terpenoid biosynthetic process"/>
    <property type="evidence" value="ECO:0007669"/>
    <property type="project" value="UniProtKB-UniRule"/>
</dbReference>
<dbReference type="CDD" id="cd13944">
    <property type="entry name" value="lytB_ispH"/>
    <property type="match status" value="1"/>
</dbReference>
<dbReference type="Gene3D" id="3.40.50.11270">
    <property type="match status" value="1"/>
</dbReference>
<dbReference type="Gene3D" id="3.40.1010.20">
    <property type="entry name" value="4-hydroxy-3-methylbut-2-enyl diphosphate reductase, catalytic domain"/>
    <property type="match status" value="2"/>
</dbReference>
<dbReference type="HAMAP" id="MF_00191">
    <property type="entry name" value="IspH"/>
    <property type="match status" value="1"/>
</dbReference>
<dbReference type="InterPro" id="IPR003451">
    <property type="entry name" value="LytB/IspH"/>
</dbReference>
<dbReference type="NCBIfam" id="TIGR00216">
    <property type="entry name" value="ispH_lytB"/>
    <property type="match status" value="1"/>
</dbReference>
<dbReference type="NCBIfam" id="NF002188">
    <property type="entry name" value="PRK01045.1-2"/>
    <property type="match status" value="1"/>
</dbReference>
<dbReference type="NCBIfam" id="NF002190">
    <property type="entry name" value="PRK01045.1-4"/>
    <property type="match status" value="1"/>
</dbReference>
<dbReference type="PANTHER" id="PTHR30426">
    <property type="entry name" value="4-HYDROXY-3-METHYLBUT-2-ENYL DIPHOSPHATE REDUCTASE"/>
    <property type="match status" value="1"/>
</dbReference>
<dbReference type="PANTHER" id="PTHR30426:SF0">
    <property type="entry name" value="4-HYDROXY-3-METHYLBUT-2-ENYL DIPHOSPHATE REDUCTASE"/>
    <property type="match status" value="1"/>
</dbReference>
<dbReference type="Pfam" id="PF02401">
    <property type="entry name" value="LYTB"/>
    <property type="match status" value="1"/>
</dbReference>
<protein>
    <recommendedName>
        <fullName evidence="1">4-hydroxy-3-methylbut-2-enyl diphosphate reductase</fullName>
        <shortName evidence="1">HMBPP reductase</shortName>
        <ecNumber evidence="1">1.17.7.4</ecNumber>
    </recommendedName>
</protein>
<proteinExistence type="inferred from homology"/>
<comment type="function">
    <text evidence="1">Catalyzes the conversion of 1-hydroxy-2-methyl-2-(E)-butenyl 4-diphosphate (HMBPP) into a mixture of isopentenyl diphosphate (IPP) and dimethylallyl diphosphate (DMAPP). Acts in the terminal step of the DOXP/MEP pathway for isoprenoid precursor biosynthesis.</text>
</comment>
<comment type="catalytic activity">
    <reaction evidence="1">
        <text>isopentenyl diphosphate + 2 oxidized [2Fe-2S]-[ferredoxin] + H2O = (2E)-4-hydroxy-3-methylbut-2-enyl diphosphate + 2 reduced [2Fe-2S]-[ferredoxin] + 2 H(+)</text>
        <dbReference type="Rhea" id="RHEA:24488"/>
        <dbReference type="Rhea" id="RHEA-COMP:10000"/>
        <dbReference type="Rhea" id="RHEA-COMP:10001"/>
        <dbReference type="ChEBI" id="CHEBI:15377"/>
        <dbReference type="ChEBI" id="CHEBI:15378"/>
        <dbReference type="ChEBI" id="CHEBI:33737"/>
        <dbReference type="ChEBI" id="CHEBI:33738"/>
        <dbReference type="ChEBI" id="CHEBI:128753"/>
        <dbReference type="ChEBI" id="CHEBI:128769"/>
        <dbReference type="EC" id="1.17.7.4"/>
    </reaction>
</comment>
<comment type="catalytic activity">
    <reaction evidence="1">
        <text>dimethylallyl diphosphate + 2 oxidized [2Fe-2S]-[ferredoxin] + H2O = (2E)-4-hydroxy-3-methylbut-2-enyl diphosphate + 2 reduced [2Fe-2S]-[ferredoxin] + 2 H(+)</text>
        <dbReference type="Rhea" id="RHEA:24825"/>
        <dbReference type="Rhea" id="RHEA-COMP:10000"/>
        <dbReference type="Rhea" id="RHEA-COMP:10001"/>
        <dbReference type="ChEBI" id="CHEBI:15377"/>
        <dbReference type="ChEBI" id="CHEBI:15378"/>
        <dbReference type="ChEBI" id="CHEBI:33737"/>
        <dbReference type="ChEBI" id="CHEBI:33738"/>
        <dbReference type="ChEBI" id="CHEBI:57623"/>
        <dbReference type="ChEBI" id="CHEBI:128753"/>
        <dbReference type="EC" id="1.17.7.4"/>
    </reaction>
</comment>
<comment type="cofactor">
    <cofactor evidence="1">
        <name>[4Fe-4S] cluster</name>
        <dbReference type="ChEBI" id="CHEBI:49883"/>
    </cofactor>
    <text evidence="1">Binds 1 [4Fe-4S] cluster per subunit.</text>
</comment>
<comment type="pathway">
    <text evidence="1">Isoprenoid biosynthesis; dimethylallyl diphosphate biosynthesis; dimethylallyl diphosphate from (2E)-4-hydroxy-3-methylbutenyl diphosphate: step 1/1.</text>
</comment>
<comment type="pathway">
    <text evidence="1">Isoprenoid biosynthesis; isopentenyl diphosphate biosynthesis via DXP pathway; isopentenyl diphosphate from 1-deoxy-D-xylulose 5-phosphate: step 6/6.</text>
</comment>
<comment type="similarity">
    <text evidence="1">Belongs to the IspH family.</text>
</comment>
<name>ISPH_ECTM1</name>
<organism>
    <name type="scientific">Ectopseudomonas mendocina (strain ymp)</name>
    <name type="common">Pseudomonas mendocina</name>
    <dbReference type="NCBI Taxonomy" id="399739"/>
    <lineage>
        <taxon>Bacteria</taxon>
        <taxon>Pseudomonadati</taxon>
        <taxon>Pseudomonadota</taxon>
        <taxon>Gammaproteobacteria</taxon>
        <taxon>Pseudomonadales</taxon>
        <taxon>Pseudomonadaceae</taxon>
        <taxon>Ectopseudomonas</taxon>
    </lineage>
</organism>